<comment type="function">
    <text evidence="1">Catalyzes the isomerization between 2-isopropylmalate and 3-isopropylmalate, via the formation of 2-isopropylmaleate.</text>
</comment>
<comment type="catalytic activity">
    <reaction evidence="1">
        <text>(2R,3S)-3-isopropylmalate = (2S)-2-isopropylmalate</text>
        <dbReference type="Rhea" id="RHEA:32287"/>
        <dbReference type="ChEBI" id="CHEBI:1178"/>
        <dbReference type="ChEBI" id="CHEBI:35121"/>
        <dbReference type="EC" id="4.2.1.33"/>
    </reaction>
</comment>
<comment type="cofactor">
    <cofactor evidence="1">
        <name>[4Fe-4S] cluster</name>
        <dbReference type="ChEBI" id="CHEBI:49883"/>
    </cofactor>
    <text evidence="1">Binds 1 [4Fe-4S] cluster per subunit.</text>
</comment>
<comment type="pathway">
    <text evidence="1">Amino-acid biosynthesis; L-leucine biosynthesis; L-leucine from 3-methyl-2-oxobutanoate: step 2/4.</text>
</comment>
<comment type="subunit">
    <text evidence="1">Heterodimer of LeuC and LeuD.</text>
</comment>
<comment type="similarity">
    <text evidence="1">Belongs to the aconitase/IPM isomerase family. LeuC type 1 subfamily.</text>
</comment>
<reference key="1">
    <citation type="journal article" date="2005" name="J. Bacteriol.">
        <title>Insights on evolution of virulence and resistance from the complete genome analysis of an early methicillin-resistant Staphylococcus aureus strain and a biofilm-producing methicillin-resistant Staphylococcus epidermidis strain.</title>
        <authorList>
            <person name="Gill S.R."/>
            <person name="Fouts D.E."/>
            <person name="Archer G.L."/>
            <person name="Mongodin E.F."/>
            <person name="DeBoy R.T."/>
            <person name="Ravel J."/>
            <person name="Paulsen I.T."/>
            <person name="Kolonay J.F."/>
            <person name="Brinkac L.M."/>
            <person name="Beanan M.J."/>
            <person name="Dodson R.J."/>
            <person name="Daugherty S.C."/>
            <person name="Madupu R."/>
            <person name="Angiuoli S.V."/>
            <person name="Durkin A.S."/>
            <person name="Haft D.H."/>
            <person name="Vamathevan J.J."/>
            <person name="Khouri H."/>
            <person name="Utterback T.R."/>
            <person name="Lee C."/>
            <person name="Dimitrov G."/>
            <person name="Jiang L."/>
            <person name="Qin H."/>
            <person name="Weidman J."/>
            <person name="Tran K."/>
            <person name="Kang K.H."/>
            <person name="Hance I.R."/>
            <person name="Nelson K.E."/>
            <person name="Fraser C.M."/>
        </authorList>
    </citation>
    <scope>NUCLEOTIDE SEQUENCE [LARGE SCALE GENOMIC DNA]</scope>
    <source>
        <strain>ATCC 35984 / DSM 28319 / BCRC 17069 / CCUG 31568 / BM 3577 / RP62A</strain>
    </source>
</reference>
<proteinExistence type="inferred from homology"/>
<keyword id="KW-0004">4Fe-4S</keyword>
<keyword id="KW-0028">Amino-acid biosynthesis</keyword>
<keyword id="KW-0100">Branched-chain amino acid biosynthesis</keyword>
<keyword id="KW-0408">Iron</keyword>
<keyword id="KW-0411">Iron-sulfur</keyword>
<keyword id="KW-0432">Leucine biosynthesis</keyword>
<keyword id="KW-0456">Lyase</keyword>
<keyword id="KW-0479">Metal-binding</keyword>
<keyword id="KW-1185">Reference proteome</keyword>
<evidence type="ECO:0000255" key="1">
    <source>
        <dbReference type="HAMAP-Rule" id="MF_01026"/>
    </source>
</evidence>
<organism>
    <name type="scientific">Staphylococcus epidermidis (strain ATCC 35984 / DSM 28319 / BCRC 17069 / CCUG 31568 / BM 3577 / RP62A)</name>
    <dbReference type="NCBI Taxonomy" id="176279"/>
    <lineage>
        <taxon>Bacteria</taxon>
        <taxon>Bacillati</taxon>
        <taxon>Bacillota</taxon>
        <taxon>Bacilli</taxon>
        <taxon>Bacillales</taxon>
        <taxon>Staphylococcaceae</taxon>
        <taxon>Staphylococcus</taxon>
    </lineage>
</organism>
<protein>
    <recommendedName>
        <fullName evidence="1">3-isopropylmalate dehydratase large subunit</fullName>
        <ecNumber evidence="1">4.2.1.33</ecNumber>
    </recommendedName>
    <alternativeName>
        <fullName evidence="1">Alpha-IPM isomerase</fullName>
        <shortName evidence="1">IPMI</shortName>
    </alternativeName>
    <alternativeName>
        <fullName evidence="1">Isopropylmalate isomerase</fullName>
    </alternativeName>
</protein>
<dbReference type="EC" id="4.2.1.33" evidence="1"/>
<dbReference type="EMBL" id="CP000029">
    <property type="protein sequence ID" value="AAW55018.1"/>
    <property type="molecule type" value="Genomic_DNA"/>
</dbReference>
<dbReference type="RefSeq" id="WP_002489462.1">
    <property type="nucleotide sequence ID" value="NC_002976.3"/>
</dbReference>
<dbReference type="SMR" id="Q5HMF7"/>
<dbReference type="STRING" id="176279.SERP1671"/>
<dbReference type="KEGG" id="ser:SERP1671"/>
<dbReference type="eggNOG" id="COG0065">
    <property type="taxonomic scope" value="Bacteria"/>
</dbReference>
<dbReference type="HOGENOM" id="CLU_006714_3_4_9"/>
<dbReference type="UniPathway" id="UPA00048">
    <property type="reaction ID" value="UER00071"/>
</dbReference>
<dbReference type="Proteomes" id="UP000000531">
    <property type="component" value="Chromosome"/>
</dbReference>
<dbReference type="GO" id="GO:0003861">
    <property type="term" value="F:3-isopropylmalate dehydratase activity"/>
    <property type="evidence" value="ECO:0007669"/>
    <property type="project" value="UniProtKB-UniRule"/>
</dbReference>
<dbReference type="GO" id="GO:0051539">
    <property type="term" value="F:4 iron, 4 sulfur cluster binding"/>
    <property type="evidence" value="ECO:0007669"/>
    <property type="project" value="UniProtKB-KW"/>
</dbReference>
<dbReference type="GO" id="GO:0046872">
    <property type="term" value="F:metal ion binding"/>
    <property type="evidence" value="ECO:0007669"/>
    <property type="project" value="UniProtKB-KW"/>
</dbReference>
<dbReference type="GO" id="GO:0009098">
    <property type="term" value="P:L-leucine biosynthetic process"/>
    <property type="evidence" value="ECO:0007669"/>
    <property type="project" value="UniProtKB-UniRule"/>
</dbReference>
<dbReference type="CDD" id="cd01583">
    <property type="entry name" value="IPMI"/>
    <property type="match status" value="1"/>
</dbReference>
<dbReference type="Gene3D" id="3.30.499.10">
    <property type="entry name" value="Aconitase, domain 3"/>
    <property type="match status" value="2"/>
</dbReference>
<dbReference type="HAMAP" id="MF_01026">
    <property type="entry name" value="LeuC_type1"/>
    <property type="match status" value="1"/>
</dbReference>
<dbReference type="InterPro" id="IPR004430">
    <property type="entry name" value="3-IsopropMal_deHydase_lsu"/>
</dbReference>
<dbReference type="InterPro" id="IPR015931">
    <property type="entry name" value="Acnase/IPM_dHydase_lsu_aba_1/3"/>
</dbReference>
<dbReference type="InterPro" id="IPR001030">
    <property type="entry name" value="Acoase/IPM_deHydtase_lsu_aba"/>
</dbReference>
<dbReference type="InterPro" id="IPR018136">
    <property type="entry name" value="Aconitase_4Fe-4S_BS"/>
</dbReference>
<dbReference type="InterPro" id="IPR036008">
    <property type="entry name" value="Aconitase_4Fe-4S_dom"/>
</dbReference>
<dbReference type="InterPro" id="IPR050067">
    <property type="entry name" value="IPM_dehydratase_rel_enz"/>
</dbReference>
<dbReference type="InterPro" id="IPR033941">
    <property type="entry name" value="IPMI_cat"/>
</dbReference>
<dbReference type="NCBIfam" id="TIGR00170">
    <property type="entry name" value="leuC"/>
    <property type="match status" value="1"/>
</dbReference>
<dbReference type="NCBIfam" id="NF004016">
    <property type="entry name" value="PRK05478.1"/>
    <property type="match status" value="1"/>
</dbReference>
<dbReference type="NCBIfam" id="NF009116">
    <property type="entry name" value="PRK12466.1"/>
    <property type="match status" value="1"/>
</dbReference>
<dbReference type="PANTHER" id="PTHR43822:SF9">
    <property type="entry name" value="3-ISOPROPYLMALATE DEHYDRATASE"/>
    <property type="match status" value="1"/>
</dbReference>
<dbReference type="PANTHER" id="PTHR43822">
    <property type="entry name" value="HOMOACONITASE, MITOCHONDRIAL-RELATED"/>
    <property type="match status" value="1"/>
</dbReference>
<dbReference type="Pfam" id="PF00330">
    <property type="entry name" value="Aconitase"/>
    <property type="match status" value="1"/>
</dbReference>
<dbReference type="PRINTS" id="PR00415">
    <property type="entry name" value="ACONITASE"/>
</dbReference>
<dbReference type="SUPFAM" id="SSF53732">
    <property type="entry name" value="Aconitase iron-sulfur domain"/>
    <property type="match status" value="1"/>
</dbReference>
<dbReference type="PROSITE" id="PS00450">
    <property type="entry name" value="ACONITASE_1"/>
    <property type="match status" value="1"/>
</dbReference>
<dbReference type="PROSITE" id="PS01244">
    <property type="entry name" value="ACONITASE_2"/>
    <property type="match status" value="1"/>
</dbReference>
<name>LEUC_STAEQ</name>
<accession>Q5HMF7</accession>
<gene>
    <name evidence="1" type="primary">leuC</name>
    <name type="ordered locus">SERP1671</name>
</gene>
<sequence>MGQTLFDKVWKKHVLHGKEGEPQLLYIDLHLIHEVTSPQAFEGLRIQNRKLRRPDLTFATLDHNVPTIDIFNIKDEIANKQITTLQQNAKDFGVHIFDMGSDEQGIVHMVGPETGLTQPGKTIVCGDSHTATHGAFGAIAFGIGTSEVEHVFATQTLWQTKPKNLKININGSLPAGVYAKDIILYLINQYGVDFGTGYALEFTGETIKNLSMEARMTICNMAIEAGAKYGLMQPDETTFNYVKGRPYATDFDSSMAWWKELYSDDDAYFDKVIELDVTNLEPQVTWGTNPEMGVSFSNPFPEIKNANDQRAYDYMGLHPGQKAEDIKLGYVFLGSCTNARLSDLIEASHIIKGQQVHPNITAIVVPGSRTVKKEAEALGLDKLFKDAGFEWREPGCSMCLGMNPDQVPEGVHCASTSNRNFEGRQGKGARTHLVSPAMAAAAAINGKFIDVRKVVV</sequence>
<feature type="chain" id="PRO_0000076818" description="3-isopropylmalate dehydratase large subunit">
    <location>
        <begin position="1"/>
        <end position="456"/>
    </location>
</feature>
<feature type="binding site" evidence="1">
    <location>
        <position position="336"/>
    </location>
    <ligand>
        <name>[4Fe-4S] cluster</name>
        <dbReference type="ChEBI" id="CHEBI:49883"/>
    </ligand>
</feature>
<feature type="binding site" evidence="1">
    <location>
        <position position="396"/>
    </location>
    <ligand>
        <name>[4Fe-4S] cluster</name>
        <dbReference type="ChEBI" id="CHEBI:49883"/>
    </ligand>
</feature>
<feature type="binding site" evidence="1">
    <location>
        <position position="399"/>
    </location>
    <ligand>
        <name>[4Fe-4S] cluster</name>
        <dbReference type="ChEBI" id="CHEBI:49883"/>
    </ligand>
</feature>